<accession>P24244</accession>
<accession>A5A610</accession>
<protein>
    <recommendedName>
        <fullName>Putative cytochrome bd-II ubiquinol oxidase subunit AppX</fullName>
    </recommendedName>
</protein>
<feature type="chain" id="PRO_0000168781" description="Putative cytochrome bd-II ubiquinol oxidase subunit AppX">
    <location>
        <begin position="1"/>
        <end position="30"/>
    </location>
</feature>
<feature type="transmembrane region" description="Helical" evidence="1">
    <location>
        <begin position="4"/>
        <end position="24"/>
    </location>
</feature>
<feature type="helix" evidence="7">
    <location>
        <begin position="2"/>
        <end position="24"/>
    </location>
</feature>
<feature type="turn" evidence="7">
    <location>
        <begin position="25"/>
        <end position="27"/>
    </location>
</feature>
<gene>
    <name type="primary">appX</name>
    <name type="synonym">yccB</name>
    <name type="ordered locus">b4592</name>
    <name type="ordered locus">JW0961.1</name>
    <name type="ORF">b0979.1</name>
</gene>
<comment type="function">
    <text evidence="5">Might be part of cytochrome bd-II oxidase (appB and appC). Able to restore reductant resistance to a cydX deletion mutant upon overexpression. CydX and this protein may have some functional overlap.</text>
</comment>
<comment type="subunit">
    <text>Able to interact with CydA and CydB upon overexpression.</text>
</comment>
<comment type="subcellular location">
    <subcellularLocation>
        <location evidence="6">Cell inner membrane</location>
        <topology evidence="6">Single-pass membrane protein</topology>
    </subcellularLocation>
    <text evidence="4">In sucrose cushions fractionates with the outer membrane, in sarcosyl fractionation with the inner membrane. May have its C-terminus in the cytoplasm (PubMed:21778229).</text>
</comment>
<comment type="induction">
    <text evidence="2 3">Expressed during stationary phase (PubMed:19121005) and in minimal glycerol medium, at 45 degrees Celsius, strongly (30-fold) induced in low oxygen (PubMed:19734316) (at protein level).</text>
</comment>
<comment type="disruption phenotype">
    <text evidence="5">Not essential, no change in sensitivity to reductant (beta-mercaptoethanol).</text>
</comment>
<comment type="similarity">
    <text evidence="6">Belongs to the cytochrome ubiquinol oxidase subunit X family.</text>
</comment>
<proteinExistence type="evidence at protein level"/>
<sequence>MWYLLWFVGILLMCSLSTLVLVWLDPRLKS</sequence>
<dbReference type="EMBL" id="M58708">
    <property type="protein sequence ID" value="AAA72085.1"/>
    <property type="molecule type" value="Genomic_DNA"/>
</dbReference>
<dbReference type="EMBL" id="S63811">
    <property type="protein sequence ID" value="AAB20287.1"/>
    <property type="molecule type" value="Genomic_DNA"/>
</dbReference>
<dbReference type="EMBL" id="U00096">
    <property type="protein sequence ID" value="ABP93439.1"/>
    <property type="molecule type" value="Genomic_DNA"/>
</dbReference>
<dbReference type="EMBL" id="AP009048">
    <property type="status" value="NOT_ANNOTATED_CDS"/>
    <property type="molecule type" value="Genomic_DNA"/>
</dbReference>
<dbReference type="PIR" id="A36733">
    <property type="entry name" value="A36733"/>
</dbReference>
<dbReference type="RefSeq" id="YP_001165313.1">
    <property type="nucleotide sequence ID" value="NC_000913.3"/>
</dbReference>
<dbReference type="PDB" id="7OSE">
    <property type="method" value="EM"/>
    <property type="resolution" value="3.00 A"/>
    <property type="chains" value="C/F=1-30"/>
</dbReference>
<dbReference type="PDB" id="7OY2">
    <property type="method" value="EM"/>
    <property type="resolution" value="2.06 A"/>
    <property type="chains" value="X=1-30"/>
</dbReference>
<dbReference type="PDBsum" id="7OSE"/>
<dbReference type="PDBsum" id="7OY2"/>
<dbReference type="EMDB" id="EMD-13048"/>
<dbReference type="EMDB" id="EMD-13108"/>
<dbReference type="SMR" id="P24244"/>
<dbReference type="FunCoup" id="P24244">
    <property type="interactions" value="204"/>
</dbReference>
<dbReference type="STRING" id="511145.b4592"/>
<dbReference type="TCDB" id="3.D.4.3.2">
    <property type="family name" value="the proton-translocating cytochrome oxidase (cox) superfamily"/>
</dbReference>
<dbReference type="PaxDb" id="511145-b4592"/>
<dbReference type="EnsemblBacteria" id="ABP93439">
    <property type="protein sequence ID" value="ABP93439"/>
    <property type="gene ID" value="b4592"/>
</dbReference>
<dbReference type="GeneID" id="948955"/>
<dbReference type="KEGG" id="eco:b4592"/>
<dbReference type="KEGG" id="ecoc:C3026_05975"/>
<dbReference type="PATRIC" id="fig|511145.12.peg.1014"/>
<dbReference type="EchoBASE" id="EB1105"/>
<dbReference type="InParanoid" id="P24244"/>
<dbReference type="OrthoDB" id="6570893at2"/>
<dbReference type="PhylomeDB" id="P24244"/>
<dbReference type="BioCyc" id="EcoCyc:MONOMER0-2817"/>
<dbReference type="BioCyc" id="MetaCyc:MONOMER0-2817"/>
<dbReference type="PRO" id="PR:P24244"/>
<dbReference type="Proteomes" id="UP000000625">
    <property type="component" value="Chromosome"/>
</dbReference>
<dbReference type="GO" id="GO:0009279">
    <property type="term" value="C:cell outer membrane"/>
    <property type="evidence" value="ECO:0000314"/>
    <property type="project" value="EcoCyc"/>
</dbReference>
<dbReference type="GO" id="GO:0005886">
    <property type="term" value="C:plasma membrane"/>
    <property type="evidence" value="ECO:0007669"/>
    <property type="project" value="UniProtKB-SubCell"/>
</dbReference>
<dbReference type="InterPro" id="IPR012994">
    <property type="entry name" value="YbgT_YccB"/>
</dbReference>
<dbReference type="NCBIfam" id="NF011333">
    <property type="entry name" value="PRK14749.1"/>
    <property type="match status" value="1"/>
</dbReference>
<dbReference type="Pfam" id="PF08173">
    <property type="entry name" value="YbgT_YccB"/>
    <property type="match status" value="1"/>
</dbReference>
<evidence type="ECO:0000255" key="1"/>
<evidence type="ECO:0000269" key="2">
    <source>
    </source>
</evidence>
<evidence type="ECO:0000269" key="3">
    <source>
    </source>
</evidence>
<evidence type="ECO:0000269" key="4">
    <source>
    </source>
</evidence>
<evidence type="ECO:0000269" key="5">
    <source>
    </source>
</evidence>
<evidence type="ECO:0000305" key="6"/>
<evidence type="ECO:0007829" key="7">
    <source>
        <dbReference type="PDB" id="7OY2"/>
    </source>
</evidence>
<keyword id="KW-0002">3D-structure</keyword>
<keyword id="KW-0997">Cell inner membrane</keyword>
<keyword id="KW-1003">Cell membrane</keyword>
<keyword id="KW-0472">Membrane</keyword>
<keyword id="KW-1185">Reference proteome</keyword>
<keyword id="KW-0346">Stress response</keyword>
<keyword id="KW-0812">Transmembrane</keyword>
<keyword id="KW-1133">Transmembrane helix</keyword>
<name>APPX_ECOLI</name>
<organism>
    <name type="scientific">Escherichia coli (strain K12)</name>
    <dbReference type="NCBI Taxonomy" id="83333"/>
    <lineage>
        <taxon>Bacteria</taxon>
        <taxon>Pseudomonadati</taxon>
        <taxon>Pseudomonadota</taxon>
        <taxon>Gammaproteobacteria</taxon>
        <taxon>Enterobacterales</taxon>
        <taxon>Enterobacteriaceae</taxon>
        <taxon>Escherichia</taxon>
    </lineage>
</organism>
<reference key="1">
    <citation type="journal article" date="1990" name="J. Bacteriol.">
        <title>The complete nucleotide sequence of the Escherichia coli gene appA reveals significant homology between pH 2.5 acid phosphatase and glucose-1-phosphatase.</title>
        <authorList>
            <person name="Dassa J."/>
            <person name="Marck C."/>
            <person name="Boquet P.L."/>
        </authorList>
    </citation>
    <scope>NUCLEOTIDE SEQUENCE [GENOMIC DNA]</scope>
    <source>
        <strain>K12</strain>
    </source>
</reference>
<reference key="2">
    <citation type="journal article" date="1991" name="Mol. Gen. Genet.">
        <title>A new oxygen-regulated operon in Escherichia coli comprises the genes for a putative third cytochrome oxidase and for pH 2.5 acid phosphatase (appA).</title>
        <authorList>
            <person name="Dassa J."/>
            <person name="Fsihi H."/>
            <person name="Marck C."/>
            <person name="Dion M."/>
            <person name="Kieffer-Bontemps M."/>
            <person name="Boquet P.L."/>
        </authorList>
    </citation>
    <scope>NUCLEOTIDE SEQUENCE [GENOMIC DNA]</scope>
    <source>
        <strain>K12</strain>
    </source>
</reference>
<reference key="3">
    <citation type="journal article" date="1997" name="Science">
        <title>The complete genome sequence of Escherichia coli K-12.</title>
        <authorList>
            <person name="Blattner F.R."/>
            <person name="Plunkett G. III"/>
            <person name="Bloch C.A."/>
            <person name="Perna N.T."/>
            <person name="Burland V."/>
            <person name="Riley M."/>
            <person name="Collado-Vides J."/>
            <person name="Glasner J.D."/>
            <person name="Rode C.K."/>
            <person name="Mayhew G.F."/>
            <person name="Gregor J."/>
            <person name="Davis N.W."/>
            <person name="Kirkpatrick H.A."/>
            <person name="Goeden M.A."/>
            <person name="Rose D.J."/>
            <person name="Mau B."/>
            <person name="Shao Y."/>
        </authorList>
    </citation>
    <scope>NUCLEOTIDE SEQUENCE [LARGE SCALE GENOMIC DNA]</scope>
    <source>
        <strain>K12 / MG1655 / ATCC 47076</strain>
    </source>
</reference>
<reference key="4">
    <citation type="journal article" date="2006" name="Mol. Syst. Biol.">
        <title>Highly accurate genome sequences of Escherichia coli K-12 strains MG1655 and W3110.</title>
        <authorList>
            <person name="Hayashi K."/>
            <person name="Morooka N."/>
            <person name="Yamamoto Y."/>
            <person name="Fujita K."/>
            <person name="Isono K."/>
            <person name="Choi S."/>
            <person name="Ohtsubo E."/>
            <person name="Baba T."/>
            <person name="Wanner B.L."/>
            <person name="Mori H."/>
            <person name="Horiuchi T."/>
        </authorList>
    </citation>
    <scope>NUCLEOTIDE SEQUENCE [LARGE SCALE GENOMIC DNA]</scope>
    <source>
        <strain>K12 / W3110 / ATCC 27325 / DSM 5911</strain>
    </source>
</reference>
<reference key="5">
    <citation type="journal article" date="2008" name="Mol. Microbiol.">
        <title>Small membrane proteins found by comparative genomics and ribosome binding site models.</title>
        <authorList>
            <person name="Hemm M.R."/>
            <person name="Paul B.J."/>
            <person name="Schneider T.D."/>
            <person name="Storz G."/>
            <person name="Rudd K.E."/>
        </authorList>
    </citation>
    <scope>INDUCTION</scope>
    <source>
        <strain>K12 / MG1655 / ATCC 47076</strain>
    </source>
</reference>
<reference key="6">
    <citation type="journal article" date="2010" name="J. Bacteriol.">
        <title>Small stress response proteins in Escherichia coli: proteins missed by classical proteomic studies.</title>
        <authorList>
            <person name="Hemm M.R."/>
            <person name="Paul B.J."/>
            <person name="Miranda-Rios J."/>
            <person name="Zhang A."/>
            <person name="Soltanzad N."/>
            <person name="Storz G."/>
        </authorList>
    </citation>
    <scope>INDUCTION</scope>
    <source>
        <strain>K12 / MG1655 / ATCC 47076</strain>
    </source>
</reference>
<reference key="7">
    <citation type="journal article" date="2011" name="J. Biol. Chem.">
        <title>Membrane localization of small proteins in Escherichia coli.</title>
        <authorList>
            <person name="Fontaine F."/>
            <person name="Fuchs R.T."/>
            <person name="Storz G."/>
        </authorList>
    </citation>
    <scope>SUBCELLULAR LOCATION</scope>
    <scope>TOPOLOGY</scope>
    <source>
        <strain>K12 / MG1655 / ATCC 47076</strain>
    </source>
</reference>
<reference key="8">
    <citation type="journal article" date="2013" name="J. Bacteriol.">
        <title>The Escherichia coli CydX protein is a member of the CydAB cytochrome bd oxidase complex and is required for cytochrome bd oxidase activity.</title>
        <authorList>
            <person name="Vanorsdel C.E."/>
            <person name="Bhatt S."/>
            <person name="Allen R.J."/>
            <person name="Brenner E.P."/>
            <person name="Hobson J.J."/>
            <person name="Jamil A."/>
            <person name="Haynes B.M."/>
            <person name="Genson A.M."/>
            <person name="Hemm M.R."/>
        </authorList>
    </citation>
    <scope>FUNCTION</scope>
    <scope>POSSIBLE INTERACTION WITH CYDA AND CYDB</scope>
    <scope>DISRUPTION PHENOTYPE</scope>
    <source>
        <strain>K12 / MG1655 / ATCC 47076</strain>
    </source>
</reference>